<name>GPMA_SALA4</name>
<sequence length="250" mass="28493">MAVTKLVLVRHGESQWNKENRFTGWYDVDLSEKGVSEAKAAGKLLKEEGFSFDFAYTSVLKRAIHTLWNVLDELDQAWLPVEKSWKLNERHYGALQGLNKAETAEKYGDEQVKQWRRGFAVTPPELTKDDERYPGHDPRYAKLSEKELPLTESLALTIDRVIPYWNDTILPRMKSGERVIIAAHGNSLRALVKYLDNMSEDEILELNIPTGVPLVYEFDENFKPLKHYYLGNADEIAAKAAAVANQGKAK</sequence>
<reference key="1">
    <citation type="journal article" date="2011" name="J. Bacteriol.">
        <title>Comparative genomics of 28 Salmonella enterica isolates: evidence for CRISPR-mediated adaptive sublineage evolution.</title>
        <authorList>
            <person name="Fricke W.F."/>
            <person name="Mammel M.K."/>
            <person name="McDermott P.F."/>
            <person name="Tartera C."/>
            <person name="White D.G."/>
            <person name="Leclerc J.E."/>
            <person name="Ravel J."/>
            <person name="Cebula T.A."/>
        </authorList>
    </citation>
    <scope>NUCLEOTIDE SEQUENCE [LARGE SCALE GENOMIC DNA]</scope>
    <source>
        <strain>SL483</strain>
    </source>
</reference>
<organism>
    <name type="scientific">Salmonella agona (strain SL483)</name>
    <dbReference type="NCBI Taxonomy" id="454166"/>
    <lineage>
        <taxon>Bacteria</taxon>
        <taxon>Pseudomonadati</taxon>
        <taxon>Pseudomonadota</taxon>
        <taxon>Gammaproteobacteria</taxon>
        <taxon>Enterobacterales</taxon>
        <taxon>Enterobacteriaceae</taxon>
        <taxon>Salmonella</taxon>
    </lineage>
</organism>
<comment type="function">
    <text evidence="1">Catalyzes the interconversion of 2-phosphoglycerate and 3-phosphoglycerate.</text>
</comment>
<comment type="catalytic activity">
    <reaction evidence="1">
        <text>(2R)-2-phosphoglycerate = (2R)-3-phosphoglycerate</text>
        <dbReference type="Rhea" id="RHEA:15901"/>
        <dbReference type="ChEBI" id="CHEBI:58272"/>
        <dbReference type="ChEBI" id="CHEBI:58289"/>
        <dbReference type="EC" id="5.4.2.11"/>
    </reaction>
</comment>
<comment type="pathway">
    <text evidence="1">Carbohydrate degradation; glycolysis; pyruvate from D-glyceraldehyde 3-phosphate: step 3/5.</text>
</comment>
<comment type="subunit">
    <text evidence="1">Homodimer.</text>
</comment>
<comment type="similarity">
    <text evidence="1">Belongs to the phosphoglycerate mutase family. BPG-dependent PGAM subfamily.</text>
</comment>
<evidence type="ECO:0000255" key="1">
    <source>
        <dbReference type="HAMAP-Rule" id="MF_01039"/>
    </source>
</evidence>
<proteinExistence type="inferred from homology"/>
<keyword id="KW-0312">Gluconeogenesis</keyword>
<keyword id="KW-0324">Glycolysis</keyword>
<keyword id="KW-0413">Isomerase</keyword>
<feature type="chain" id="PRO_1000135970" description="2,3-bisphosphoglycerate-dependent phosphoglycerate mutase">
    <location>
        <begin position="1"/>
        <end position="250"/>
    </location>
</feature>
<feature type="active site" description="Tele-phosphohistidine intermediate" evidence="1">
    <location>
        <position position="11"/>
    </location>
</feature>
<feature type="active site" description="Proton donor/acceptor" evidence="1">
    <location>
        <position position="89"/>
    </location>
</feature>
<feature type="binding site" evidence="1">
    <location>
        <begin position="10"/>
        <end position="17"/>
    </location>
    <ligand>
        <name>substrate</name>
    </ligand>
</feature>
<feature type="binding site" evidence="1">
    <location>
        <begin position="23"/>
        <end position="24"/>
    </location>
    <ligand>
        <name>substrate</name>
    </ligand>
</feature>
<feature type="binding site" evidence="1">
    <location>
        <position position="62"/>
    </location>
    <ligand>
        <name>substrate</name>
    </ligand>
</feature>
<feature type="binding site" evidence="1">
    <location>
        <begin position="89"/>
        <end position="92"/>
    </location>
    <ligand>
        <name>substrate</name>
    </ligand>
</feature>
<feature type="binding site" evidence="1">
    <location>
        <position position="100"/>
    </location>
    <ligand>
        <name>substrate</name>
    </ligand>
</feature>
<feature type="binding site" evidence="1">
    <location>
        <begin position="116"/>
        <end position="117"/>
    </location>
    <ligand>
        <name>substrate</name>
    </ligand>
</feature>
<feature type="binding site" evidence="1">
    <location>
        <begin position="185"/>
        <end position="186"/>
    </location>
    <ligand>
        <name>substrate</name>
    </ligand>
</feature>
<feature type="site" description="Transition state stabilizer" evidence="1">
    <location>
        <position position="184"/>
    </location>
</feature>
<gene>
    <name evidence="1" type="primary">gpmA</name>
    <name type="ordered locus">SeAg_B0808</name>
</gene>
<protein>
    <recommendedName>
        <fullName evidence="1">2,3-bisphosphoglycerate-dependent phosphoglycerate mutase</fullName>
        <shortName evidence="1">BPG-dependent PGAM</shortName>
        <shortName evidence="1">PGAM</shortName>
        <shortName evidence="1">Phosphoglyceromutase</shortName>
        <shortName evidence="1">dPGM</shortName>
        <ecNumber evidence="1">5.4.2.11</ecNumber>
    </recommendedName>
</protein>
<accession>B5F050</accession>
<dbReference type="EC" id="5.4.2.11" evidence="1"/>
<dbReference type="EMBL" id="CP001138">
    <property type="protein sequence ID" value="ACH49968.1"/>
    <property type="molecule type" value="Genomic_DNA"/>
</dbReference>
<dbReference type="RefSeq" id="WP_000301556.1">
    <property type="nucleotide sequence ID" value="NC_011149.1"/>
</dbReference>
<dbReference type="SMR" id="B5F050"/>
<dbReference type="KEGG" id="sea:SeAg_B0808"/>
<dbReference type="HOGENOM" id="CLU_033323_1_1_6"/>
<dbReference type="UniPathway" id="UPA00109">
    <property type="reaction ID" value="UER00186"/>
</dbReference>
<dbReference type="Proteomes" id="UP000008819">
    <property type="component" value="Chromosome"/>
</dbReference>
<dbReference type="GO" id="GO:0004619">
    <property type="term" value="F:phosphoglycerate mutase activity"/>
    <property type="evidence" value="ECO:0007669"/>
    <property type="project" value="UniProtKB-EC"/>
</dbReference>
<dbReference type="GO" id="GO:0006094">
    <property type="term" value="P:gluconeogenesis"/>
    <property type="evidence" value="ECO:0007669"/>
    <property type="project" value="UniProtKB-UniRule"/>
</dbReference>
<dbReference type="GO" id="GO:0006096">
    <property type="term" value="P:glycolytic process"/>
    <property type="evidence" value="ECO:0007669"/>
    <property type="project" value="UniProtKB-UniRule"/>
</dbReference>
<dbReference type="CDD" id="cd07067">
    <property type="entry name" value="HP_PGM_like"/>
    <property type="match status" value="1"/>
</dbReference>
<dbReference type="FunFam" id="3.40.50.1240:FF:000003">
    <property type="entry name" value="2,3-bisphosphoglycerate-dependent phosphoglycerate mutase"/>
    <property type="match status" value="1"/>
</dbReference>
<dbReference type="Gene3D" id="3.40.50.1240">
    <property type="entry name" value="Phosphoglycerate mutase-like"/>
    <property type="match status" value="1"/>
</dbReference>
<dbReference type="HAMAP" id="MF_01039">
    <property type="entry name" value="PGAM_GpmA"/>
    <property type="match status" value="1"/>
</dbReference>
<dbReference type="InterPro" id="IPR013078">
    <property type="entry name" value="His_Pase_superF_clade-1"/>
</dbReference>
<dbReference type="InterPro" id="IPR029033">
    <property type="entry name" value="His_PPase_superfam"/>
</dbReference>
<dbReference type="InterPro" id="IPR001345">
    <property type="entry name" value="PG/BPGM_mutase_AS"/>
</dbReference>
<dbReference type="InterPro" id="IPR005952">
    <property type="entry name" value="Phosphogly_mut1"/>
</dbReference>
<dbReference type="NCBIfam" id="TIGR01258">
    <property type="entry name" value="pgm_1"/>
    <property type="match status" value="1"/>
</dbReference>
<dbReference type="NCBIfam" id="NF010713">
    <property type="entry name" value="PRK14115.1"/>
    <property type="match status" value="1"/>
</dbReference>
<dbReference type="PANTHER" id="PTHR11931">
    <property type="entry name" value="PHOSPHOGLYCERATE MUTASE"/>
    <property type="match status" value="1"/>
</dbReference>
<dbReference type="Pfam" id="PF00300">
    <property type="entry name" value="His_Phos_1"/>
    <property type="match status" value="1"/>
</dbReference>
<dbReference type="PIRSF" id="PIRSF000709">
    <property type="entry name" value="6PFK_2-Ptase"/>
    <property type="match status" value="1"/>
</dbReference>
<dbReference type="SMART" id="SM00855">
    <property type="entry name" value="PGAM"/>
    <property type="match status" value="1"/>
</dbReference>
<dbReference type="SUPFAM" id="SSF53254">
    <property type="entry name" value="Phosphoglycerate mutase-like"/>
    <property type="match status" value="1"/>
</dbReference>
<dbReference type="PROSITE" id="PS00175">
    <property type="entry name" value="PG_MUTASE"/>
    <property type="match status" value="1"/>
</dbReference>